<proteinExistence type="inferred from homology"/>
<name>SVF1_NEUCR</name>
<sequence>MFKWAQAALANVAGTKEPIYGPEAIRSVAEEAKTTPYTETTKDDLKWQAMESTCVETQCFYFMTDSGQLAFAQVIYSNVAGIRTTCQFNCKVFSLDGSKPHLWCSTPLNNHEFSEDKTSFYATDCAVELSEDGNSYTIKSLNDERSIVNVTIKRTAPGFKIGTSGTTLFGTDLANPWGSMRHVFWPRCVAEGTIATPDGPVDCKGRAMFVHALQGMKPHHAAAKWNFCNFQGPNYSAVLMQYTTPPSYGSTVVNVGGIVKDNEIIFAGAEGAVTHVAIKGDTENDWPEPTAIKFEWKGTTKDGKQADAVLEGELEDKLDRIDVMAEVPGFVKQIVAGAVGTKPYIYQYAPQKKKLTLKLKLGEEEISEEGYLFSEATFISA</sequence>
<dbReference type="EMBL" id="CM002239">
    <property type="protein sequence ID" value="EAA27082.1"/>
    <property type="molecule type" value="Genomic_DNA"/>
</dbReference>
<dbReference type="RefSeq" id="XP_956318.1">
    <property type="nucleotide sequence ID" value="XM_951225.3"/>
</dbReference>
<dbReference type="FunCoup" id="Q7RX39">
    <property type="interactions" value="99"/>
</dbReference>
<dbReference type="STRING" id="367110.Q7RX39"/>
<dbReference type="PaxDb" id="5141-EFNCRP00000005275"/>
<dbReference type="EnsemblFungi" id="EAA27082">
    <property type="protein sequence ID" value="EAA27082"/>
    <property type="gene ID" value="NCU04337"/>
</dbReference>
<dbReference type="GeneID" id="3872465"/>
<dbReference type="KEGG" id="ncr:NCU04337"/>
<dbReference type="VEuPathDB" id="FungiDB:NCU04337"/>
<dbReference type="HOGENOM" id="CLU_030205_2_0_1"/>
<dbReference type="InParanoid" id="Q7RX39"/>
<dbReference type="OMA" id="AFWPRCV"/>
<dbReference type="OrthoDB" id="2590239at2759"/>
<dbReference type="Proteomes" id="UP000001805">
    <property type="component" value="Chromosome 4, Linkage Group IV"/>
</dbReference>
<dbReference type="GO" id="GO:0033106">
    <property type="term" value="C:cis-Golgi network membrane"/>
    <property type="evidence" value="ECO:0000250"/>
    <property type="project" value="UniProtKB"/>
</dbReference>
<dbReference type="GO" id="GO:0005737">
    <property type="term" value="C:cytoplasm"/>
    <property type="evidence" value="ECO:0000250"/>
    <property type="project" value="UniProtKB"/>
</dbReference>
<dbReference type="GO" id="GO:0005789">
    <property type="term" value="C:endoplasmic reticulum membrane"/>
    <property type="evidence" value="ECO:0007669"/>
    <property type="project" value="UniProtKB-SubCell"/>
</dbReference>
<dbReference type="GO" id="GO:0005634">
    <property type="term" value="C:nucleus"/>
    <property type="evidence" value="ECO:0007669"/>
    <property type="project" value="UniProtKB-SubCell"/>
</dbReference>
<dbReference type="GO" id="GO:0097001">
    <property type="term" value="F:ceramide binding"/>
    <property type="evidence" value="ECO:0000250"/>
    <property type="project" value="UniProtKB"/>
</dbReference>
<dbReference type="GO" id="GO:0035621">
    <property type="term" value="P:ER to Golgi ceramide transport"/>
    <property type="evidence" value="ECO:0000250"/>
    <property type="project" value="UniProtKB"/>
</dbReference>
<dbReference type="GO" id="GO:0006979">
    <property type="term" value="P:response to oxidative stress"/>
    <property type="evidence" value="ECO:0007669"/>
    <property type="project" value="InterPro"/>
</dbReference>
<dbReference type="InterPro" id="IPR051385">
    <property type="entry name" value="Ceramide-binding_SVF1"/>
</dbReference>
<dbReference type="InterPro" id="IPR033394">
    <property type="entry name" value="Svf1-like_C"/>
</dbReference>
<dbReference type="InterPro" id="IPR013931">
    <property type="entry name" value="Svf1-like_N"/>
</dbReference>
<dbReference type="PANTHER" id="PTHR47107:SF1">
    <property type="entry name" value="CERAMIDE-BINDING PROTEIN SVF1-RELATED"/>
    <property type="match status" value="1"/>
</dbReference>
<dbReference type="PANTHER" id="PTHR47107">
    <property type="entry name" value="SVF1-LIKE PROTEIN YDR222W-RELATED"/>
    <property type="match status" value="1"/>
</dbReference>
<dbReference type="Pfam" id="PF08622">
    <property type="entry name" value="Svf1"/>
    <property type="match status" value="1"/>
</dbReference>
<dbReference type="Pfam" id="PF17187">
    <property type="entry name" value="Svf1_C"/>
    <property type="match status" value="1"/>
</dbReference>
<dbReference type="SUPFAM" id="SSF159245">
    <property type="entry name" value="AttH-like"/>
    <property type="match status" value="1"/>
</dbReference>
<accession>Q7RX39</accession>
<reference key="1">
    <citation type="journal article" date="2003" name="Nature">
        <title>The genome sequence of the filamentous fungus Neurospora crassa.</title>
        <authorList>
            <person name="Galagan J.E."/>
            <person name="Calvo S.E."/>
            <person name="Borkovich K.A."/>
            <person name="Selker E.U."/>
            <person name="Read N.D."/>
            <person name="Jaffe D.B."/>
            <person name="FitzHugh W."/>
            <person name="Ma L.-J."/>
            <person name="Smirnov S."/>
            <person name="Purcell S."/>
            <person name="Rehman B."/>
            <person name="Elkins T."/>
            <person name="Engels R."/>
            <person name="Wang S."/>
            <person name="Nielsen C.B."/>
            <person name="Butler J."/>
            <person name="Endrizzi M."/>
            <person name="Qui D."/>
            <person name="Ianakiev P."/>
            <person name="Bell-Pedersen D."/>
            <person name="Nelson M.A."/>
            <person name="Werner-Washburne M."/>
            <person name="Selitrennikoff C.P."/>
            <person name="Kinsey J.A."/>
            <person name="Braun E.L."/>
            <person name="Zelter A."/>
            <person name="Schulte U."/>
            <person name="Kothe G.O."/>
            <person name="Jedd G."/>
            <person name="Mewes H.-W."/>
            <person name="Staben C."/>
            <person name="Marcotte E."/>
            <person name="Greenberg D."/>
            <person name="Roy A."/>
            <person name="Foley K."/>
            <person name="Naylor J."/>
            <person name="Stange-Thomann N."/>
            <person name="Barrett R."/>
            <person name="Gnerre S."/>
            <person name="Kamal M."/>
            <person name="Kamvysselis M."/>
            <person name="Mauceli E.W."/>
            <person name="Bielke C."/>
            <person name="Rudd S."/>
            <person name="Frishman D."/>
            <person name="Krystofova S."/>
            <person name="Rasmussen C."/>
            <person name="Metzenberg R.L."/>
            <person name="Perkins D.D."/>
            <person name="Kroken S."/>
            <person name="Cogoni C."/>
            <person name="Macino G."/>
            <person name="Catcheside D.E.A."/>
            <person name="Li W."/>
            <person name="Pratt R.J."/>
            <person name="Osmani S.A."/>
            <person name="DeSouza C.P.C."/>
            <person name="Glass N.L."/>
            <person name="Orbach M.J."/>
            <person name="Berglund J.A."/>
            <person name="Voelker R."/>
            <person name="Yarden O."/>
            <person name="Plamann M."/>
            <person name="Seiler S."/>
            <person name="Dunlap J.C."/>
            <person name="Radford A."/>
            <person name="Aramayo R."/>
            <person name="Natvig D.O."/>
            <person name="Alex L.A."/>
            <person name="Mannhaupt G."/>
            <person name="Ebbole D.J."/>
            <person name="Freitag M."/>
            <person name="Paulsen I."/>
            <person name="Sachs M.S."/>
            <person name="Lander E.S."/>
            <person name="Nusbaum C."/>
            <person name="Birren B.W."/>
        </authorList>
    </citation>
    <scope>NUCLEOTIDE SEQUENCE [LARGE SCALE GENOMIC DNA]</scope>
    <source>
        <strain>ATCC 24698 / 74-OR23-1A / CBS 708.71 / DSM 1257 / FGSC 987</strain>
    </source>
</reference>
<feature type="chain" id="PRO_0000072333" description="Ceramide-binding protein svf-1">
    <location>
        <begin position="1"/>
        <end position="381"/>
    </location>
</feature>
<feature type="region of interest" description="Peripherally associates with membranes" evidence="1">
    <location>
        <begin position="1"/>
        <end position="18"/>
    </location>
</feature>
<organism>
    <name type="scientific">Neurospora crassa (strain ATCC 24698 / 74-OR23-1A / CBS 708.71 / DSM 1257 / FGSC 987)</name>
    <dbReference type="NCBI Taxonomy" id="367110"/>
    <lineage>
        <taxon>Eukaryota</taxon>
        <taxon>Fungi</taxon>
        <taxon>Dikarya</taxon>
        <taxon>Ascomycota</taxon>
        <taxon>Pezizomycotina</taxon>
        <taxon>Sordariomycetes</taxon>
        <taxon>Sordariomycetidae</taxon>
        <taxon>Sordariales</taxon>
        <taxon>Sordariaceae</taxon>
        <taxon>Neurospora</taxon>
    </lineage>
</organism>
<comment type="function">
    <text evidence="1">Ceramide-binding protein that may transfer ceramides from the endoplasmic reticulum membrane to the cis-Golgi network membrane, and is thereby required for the biosynthesis of complex sphingolipids.</text>
</comment>
<comment type="subcellular location">
    <subcellularLocation>
        <location evidence="1">Golgi apparatus</location>
        <location evidence="1">cis-Golgi network membrane</location>
        <topology evidence="1">Peripheral membrane protein</topology>
    </subcellularLocation>
    <subcellularLocation>
        <location evidence="1">Endoplasmic reticulum membrane</location>
        <topology evidence="1">Peripheral membrane protein</topology>
    </subcellularLocation>
    <subcellularLocation>
        <location evidence="1">Cytoplasm</location>
    </subcellularLocation>
    <subcellularLocation>
        <location evidence="1">Nucleus</location>
    </subcellularLocation>
    <text evidence="1">Localizes to the interface between the cis-Golgi network and endoplasmic reticulum exit sites.</text>
</comment>
<comment type="similarity">
    <text evidence="2">Belongs to the SVF1 family.</text>
</comment>
<protein>
    <recommendedName>
        <fullName evidence="2">Ceramide-binding protein svf-1</fullName>
    </recommendedName>
    <alternativeName>
        <fullName>Survival factor 1</fullName>
    </alternativeName>
</protein>
<gene>
    <name type="primary">svf-1</name>
    <name type="ORF">NCU04337</name>
</gene>
<keyword id="KW-0963">Cytoplasm</keyword>
<keyword id="KW-0256">Endoplasmic reticulum</keyword>
<keyword id="KW-0333">Golgi apparatus</keyword>
<keyword id="KW-0445">Lipid transport</keyword>
<keyword id="KW-0472">Membrane</keyword>
<keyword id="KW-0539">Nucleus</keyword>
<keyword id="KW-1185">Reference proteome</keyword>
<keyword id="KW-0813">Transport</keyword>
<evidence type="ECO:0000250" key="1">
    <source>
        <dbReference type="UniProtKB" id="Q05515"/>
    </source>
</evidence>
<evidence type="ECO:0000305" key="2"/>